<keyword id="KW-0496">Mitochondrion</keyword>
<gene>
    <name type="primary">RRG7</name>
    <name type="ORF">C1Q_01956</name>
</gene>
<accession>C7GNV5</accession>
<proteinExistence type="inferred from homology"/>
<evidence type="ECO:0000250" key="1"/>
<evidence type="ECO:0000305" key="2"/>
<protein>
    <recommendedName>
        <fullName>Required for respiratory growth protein 7, mitochondrial</fullName>
    </recommendedName>
</protein>
<sequence length="242" mass="27967">MIKNYLGRRWLNNPAIQAYVKQNAAVAHSTVFQGNLYEYTVMRELSEKLRMTKLRKTGGAHDGGVDIKGSWPVDDIYWKISSLMPNLEMASNIKRTNSQNGFVLKPLKYRIIDHTFEPLKVLVQCKAFTKSKLSPREFRELVGTFTSLVSHSQRNKTVCIMCSPHMLTKDTLNLINNITLPLIYLRVEMLKEKTDGHFDLINSGKLINYYENSYASTLMQDCKISEWLKLKLYKNSDFNSEK</sequence>
<comment type="subcellular location">
    <subcellularLocation>
        <location evidence="1">Mitochondrion</location>
    </subcellularLocation>
</comment>
<comment type="similarity">
    <text evidence="2">Belongs to the RRG7 family.</text>
</comment>
<reference key="1">
    <citation type="journal article" date="2009" name="Genome Res.">
        <title>Genome structure of a Saccharomyces cerevisiae strain widely used in bioethanol production.</title>
        <authorList>
            <person name="Argueso J.L."/>
            <person name="Carazzolle M.F."/>
            <person name="Mieczkowski P.A."/>
            <person name="Duarte F.M."/>
            <person name="Netto O.V.C."/>
            <person name="Missawa S.K."/>
            <person name="Galzerani F."/>
            <person name="Costa G.G.L."/>
            <person name="Vidal R.O."/>
            <person name="Noronha M.F."/>
            <person name="Dominska M."/>
            <person name="Andrietta M.G.S."/>
            <person name="Andrietta S.R."/>
            <person name="Cunha A.F."/>
            <person name="Gomes L.H."/>
            <person name="Tavares F.C.A."/>
            <person name="Alcarde A.R."/>
            <person name="Dietrich F.S."/>
            <person name="McCusker J.H."/>
            <person name="Petes T.D."/>
            <person name="Pereira G.A.G."/>
        </authorList>
    </citation>
    <scope>NUCLEOTIDE SEQUENCE [LARGE SCALE GENOMIC DNA]</scope>
    <source>
        <strain>JAY291</strain>
    </source>
</reference>
<dbReference type="EMBL" id="ACFL01000078">
    <property type="protein sequence ID" value="EEU07545.1"/>
    <property type="molecule type" value="Genomic_DNA"/>
</dbReference>
<dbReference type="Proteomes" id="UP000008073">
    <property type="component" value="Unassembled WGS sequence"/>
</dbReference>
<dbReference type="GO" id="GO:0005739">
    <property type="term" value="C:mitochondrion"/>
    <property type="evidence" value="ECO:0007669"/>
    <property type="project" value="UniProtKB-SubCell"/>
</dbReference>
<dbReference type="InterPro" id="IPR018828">
    <property type="entry name" value="RRG7"/>
</dbReference>
<dbReference type="PANTHER" id="PTHR28133">
    <property type="entry name" value="REQUIRED FOR RESPIRATORY GROWTH PROTEIN 7, MITOCHONDRIAL"/>
    <property type="match status" value="1"/>
</dbReference>
<dbReference type="PANTHER" id="PTHR28133:SF1">
    <property type="entry name" value="REQUIRED FOR RESPIRATORY GROWTH PROTEIN 7, MITOCHONDRIAL"/>
    <property type="match status" value="1"/>
</dbReference>
<dbReference type="Pfam" id="PF10356">
    <property type="entry name" value="RRG7"/>
    <property type="match status" value="1"/>
</dbReference>
<organism>
    <name type="scientific">Saccharomyces cerevisiae (strain JAY291)</name>
    <name type="common">Baker's yeast</name>
    <dbReference type="NCBI Taxonomy" id="574961"/>
    <lineage>
        <taxon>Eukaryota</taxon>
        <taxon>Fungi</taxon>
        <taxon>Dikarya</taxon>
        <taxon>Ascomycota</taxon>
        <taxon>Saccharomycotina</taxon>
        <taxon>Saccharomycetes</taxon>
        <taxon>Saccharomycetales</taxon>
        <taxon>Saccharomycetaceae</taxon>
        <taxon>Saccharomyces</taxon>
    </lineage>
</organism>
<name>RRG7_YEAS2</name>
<feature type="chain" id="PRO_0000405458" description="Required for respiratory growth protein 7, mitochondrial">
    <location>
        <begin position="1"/>
        <end position="242"/>
    </location>
</feature>